<gene>
    <name evidence="1" type="primary">nqrB</name>
    <name type="ordered locus">CAB355</name>
</gene>
<protein>
    <recommendedName>
        <fullName evidence="1">Na(+)-translocating NADH-quinone reductase subunit B</fullName>
        <shortName evidence="1">Na(+)-NQR subunit B</shortName>
        <shortName evidence="1">Na(+)-translocating NQR subunit B</shortName>
        <ecNumber evidence="1">7.2.1.1</ecNumber>
    </recommendedName>
    <alternativeName>
        <fullName evidence="1">NQR complex subunit B</fullName>
    </alternativeName>
    <alternativeName>
        <fullName evidence="1">NQR-1 subunit B</fullName>
    </alternativeName>
</protein>
<proteinExistence type="inferred from homology"/>
<reference key="1">
    <citation type="journal article" date="2005" name="Genome Res.">
        <title>The Chlamydophila abortus genome sequence reveals an array of variable proteins that contribute to interspecies variation.</title>
        <authorList>
            <person name="Thomson N.R."/>
            <person name="Yeats C."/>
            <person name="Bell K."/>
            <person name="Holden M.T.G."/>
            <person name="Bentley S.D."/>
            <person name="Livingstone M."/>
            <person name="Cerdeno-Tarraga A.-M."/>
            <person name="Harris B."/>
            <person name="Doggett J."/>
            <person name="Ormond D."/>
            <person name="Mungall K."/>
            <person name="Clarke K."/>
            <person name="Feltwell T."/>
            <person name="Hance Z."/>
            <person name="Sanders M."/>
            <person name="Quail M.A."/>
            <person name="Price C."/>
            <person name="Barrell B.G."/>
            <person name="Parkhill J."/>
            <person name="Longbottom D."/>
        </authorList>
    </citation>
    <scope>NUCLEOTIDE SEQUENCE [LARGE SCALE GENOMIC DNA]</scope>
    <source>
        <strain>DSM 27085 / S26/3</strain>
    </source>
</reference>
<feature type="chain" id="PRO_1000060134" description="Na(+)-translocating NADH-quinone reductase subunit B">
    <location>
        <begin position="1"/>
        <end position="503"/>
    </location>
</feature>
<feature type="transmembrane region" description="Helical" evidence="1">
    <location>
        <begin position="55"/>
        <end position="75"/>
    </location>
</feature>
<feature type="transmembrane region" description="Helical" evidence="1">
    <location>
        <begin position="120"/>
        <end position="140"/>
    </location>
</feature>
<feature type="transmembrane region" description="Helical" evidence="1">
    <location>
        <begin position="161"/>
        <end position="181"/>
    </location>
</feature>
<feature type="transmembrane region" description="Helical" evidence="1">
    <location>
        <begin position="186"/>
        <end position="206"/>
    </location>
</feature>
<feature type="transmembrane region" description="Helical" evidence="1">
    <location>
        <begin position="361"/>
        <end position="381"/>
    </location>
</feature>
<feature type="transmembrane region" description="Helical" evidence="1">
    <location>
        <begin position="387"/>
        <end position="407"/>
    </location>
</feature>
<feature type="transmembrane region" description="Helical" evidence="1">
    <location>
        <begin position="417"/>
        <end position="437"/>
    </location>
</feature>
<feature type="transmembrane region" description="Helical" evidence="1">
    <location>
        <begin position="452"/>
        <end position="472"/>
    </location>
</feature>
<feature type="transmembrane region" description="Helical" evidence="1">
    <location>
        <begin position="475"/>
        <end position="495"/>
    </location>
</feature>
<feature type="modified residue" description="FMN phosphoryl threonine" evidence="1">
    <location>
        <position position="248"/>
    </location>
</feature>
<accession>Q5L6C0</accession>
<evidence type="ECO:0000255" key="1">
    <source>
        <dbReference type="HAMAP-Rule" id="MF_00426"/>
    </source>
</evidence>
<comment type="function">
    <text evidence="1">NQR complex catalyzes the reduction of ubiquinone-1 to ubiquinol by two successive reactions, coupled with the transport of Na(+) ions from the cytoplasm to the periplasm. NqrA to NqrE are probably involved in the second step, the conversion of ubisemiquinone to ubiquinol.</text>
</comment>
<comment type="catalytic activity">
    <reaction evidence="1">
        <text>a ubiquinone + n Na(+)(in) + NADH + H(+) = a ubiquinol + n Na(+)(out) + NAD(+)</text>
        <dbReference type="Rhea" id="RHEA:47748"/>
        <dbReference type="Rhea" id="RHEA-COMP:9565"/>
        <dbReference type="Rhea" id="RHEA-COMP:9566"/>
        <dbReference type="ChEBI" id="CHEBI:15378"/>
        <dbReference type="ChEBI" id="CHEBI:16389"/>
        <dbReference type="ChEBI" id="CHEBI:17976"/>
        <dbReference type="ChEBI" id="CHEBI:29101"/>
        <dbReference type="ChEBI" id="CHEBI:57540"/>
        <dbReference type="ChEBI" id="CHEBI:57945"/>
        <dbReference type="EC" id="7.2.1.1"/>
    </reaction>
</comment>
<comment type="cofactor">
    <cofactor evidence="1">
        <name>FMN</name>
        <dbReference type="ChEBI" id="CHEBI:58210"/>
    </cofactor>
</comment>
<comment type="subunit">
    <text evidence="1">Composed of six subunits; NqrA, NqrB, NqrC, NqrD, NqrE and NqrF.</text>
</comment>
<comment type="subcellular location">
    <subcellularLocation>
        <location evidence="1">Cell inner membrane</location>
        <topology evidence="1">Multi-pass membrane protein</topology>
    </subcellularLocation>
</comment>
<comment type="similarity">
    <text evidence="1">Belongs to the NqrB/RnfD family.</text>
</comment>
<name>NQRB_CHLAB</name>
<keyword id="KW-0997">Cell inner membrane</keyword>
<keyword id="KW-1003">Cell membrane</keyword>
<keyword id="KW-0285">Flavoprotein</keyword>
<keyword id="KW-0288">FMN</keyword>
<keyword id="KW-0406">Ion transport</keyword>
<keyword id="KW-0472">Membrane</keyword>
<keyword id="KW-0520">NAD</keyword>
<keyword id="KW-0597">Phosphoprotein</keyword>
<keyword id="KW-0915">Sodium</keyword>
<keyword id="KW-0739">Sodium transport</keyword>
<keyword id="KW-1278">Translocase</keyword>
<keyword id="KW-0812">Transmembrane</keyword>
<keyword id="KW-1133">Transmembrane helix</keyword>
<keyword id="KW-0813">Transport</keyword>
<keyword id="KW-0830">Ubiquinone</keyword>
<organism>
    <name type="scientific">Chlamydia abortus (strain DSM 27085 / S26/3)</name>
    <name type="common">Chlamydophila abortus</name>
    <dbReference type="NCBI Taxonomy" id="218497"/>
    <lineage>
        <taxon>Bacteria</taxon>
        <taxon>Pseudomonadati</taxon>
        <taxon>Chlamydiota</taxon>
        <taxon>Chlamydiia</taxon>
        <taxon>Chlamydiales</taxon>
        <taxon>Chlamydiaceae</taxon>
        <taxon>Chlamydia/Chlamydophila group</taxon>
        <taxon>Chlamydia</taxon>
    </lineage>
</organism>
<dbReference type="EC" id="7.2.1.1" evidence="1"/>
<dbReference type="EMBL" id="CR848038">
    <property type="protein sequence ID" value="CAH63806.1"/>
    <property type="molecule type" value="Genomic_DNA"/>
</dbReference>
<dbReference type="RefSeq" id="WP_011097012.1">
    <property type="nucleotide sequence ID" value="NC_004552.2"/>
</dbReference>
<dbReference type="SMR" id="Q5L6C0"/>
<dbReference type="KEGG" id="cab:CAB355"/>
<dbReference type="eggNOG" id="COG1805">
    <property type="taxonomic scope" value="Bacteria"/>
</dbReference>
<dbReference type="HOGENOM" id="CLU_042020_1_1_0"/>
<dbReference type="OrthoDB" id="9776359at2"/>
<dbReference type="Proteomes" id="UP000001012">
    <property type="component" value="Chromosome"/>
</dbReference>
<dbReference type="GO" id="GO:0005886">
    <property type="term" value="C:plasma membrane"/>
    <property type="evidence" value="ECO:0007669"/>
    <property type="project" value="UniProtKB-SubCell"/>
</dbReference>
<dbReference type="GO" id="GO:0010181">
    <property type="term" value="F:FMN binding"/>
    <property type="evidence" value="ECO:0007669"/>
    <property type="project" value="InterPro"/>
</dbReference>
<dbReference type="GO" id="GO:0016655">
    <property type="term" value="F:oxidoreductase activity, acting on NAD(P)H, quinone or similar compound as acceptor"/>
    <property type="evidence" value="ECO:0007669"/>
    <property type="project" value="UniProtKB-UniRule"/>
</dbReference>
<dbReference type="GO" id="GO:0022904">
    <property type="term" value="P:respiratory electron transport chain"/>
    <property type="evidence" value="ECO:0007669"/>
    <property type="project" value="InterPro"/>
</dbReference>
<dbReference type="GO" id="GO:0006814">
    <property type="term" value="P:sodium ion transport"/>
    <property type="evidence" value="ECO:0007669"/>
    <property type="project" value="UniProtKB-UniRule"/>
</dbReference>
<dbReference type="GO" id="GO:0055085">
    <property type="term" value="P:transmembrane transport"/>
    <property type="evidence" value="ECO:0007669"/>
    <property type="project" value="InterPro"/>
</dbReference>
<dbReference type="HAMAP" id="MF_00426">
    <property type="entry name" value="NqrB"/>
    <property type="match status" value="1"/>
</dbReference>
<dbReference type="InterPro" id="IPR010966">
    <property type="entry name" value="NqrB"/>
</dbReference>
<dbReference type="InterPro" id="IPR004338">
    <property type="entry name" value="NqrB/RnfD"/>
</dbReference>
<dbReference type="NCBIfam" id="TIGR01937">
    <property type="entry name" value="nqrB"/>
    <property type="match status" value="1"/>
</dbReference>
<dbReference type="NCBIfam" id="NF002181">
    <property type="entry name" value="PRK01024.1"/>
    <property type="match status" value="1"/>
</dbReference>
<dbReference type="PANTHER" id="PTHR30578">
    <property type="entry name" value="ELECTRON TRANSPORT COMPLEX PROTEIN RNFD"/>
    <property type="match status" value="1"/>
</dbReference>
<dbReference type="PANTHER" id="PTHR30578:SF1">
    <property type="entry name" value="NA(+)-TRANSLOCATING NADH-QUINONE REDUCTASE SUBUNIT B"/>
    <property type="match status" value="1"/>
</dbReference>
<dbReference type="Pfam" id="PF03116">
    <property type="entry name" value="NQR2_RnfD_RnfE"/>
    <property type="match status" value="1"/>
</dbReference>
<sequence>MLKRFVNSIWEICQKDKFQRFTPVADAIDTFCYEPIHQASSPPFIRDAVDIKRWMMLVVIALFPATFLAIWNSGIQALVYGSGNAQLMEAFLHISGFRSYLSFIFNDIGMFSVLWTGCKIFLPLLIISYTVGGACEVLFAVIRKHKIAEGLLVTGILYPLTLPPTIPYWMAALGIAFGVVVSKELFGGTGMNILNPALSGRAFLFFTFPAKMSGDVWVGSNPTHIKDSLLTMNATAGKSIIDGFSQSTCLQTLNSTPPSVKRIHVDAIASNILHMTHVPTQNVIESQFSIWTESHPGLLLDKLTLEQLQSFVTSPLSEGGLGLLPTQFDSAYAITDVIYGIGKFSSGNLFWGNILGSLGETSTFACLLGAVFLVITGIASWRTMVSFGIGAFVTAWLFKICSILIAGKHGAWAPAKFFIPAYRQLFLGGLAFGLVFMATDPVSSPTMKLAKWIYGLFIGFMTIIIRLINPAYPEGVMLAILLGNVFAPLLDYFAVRKYRRRRI</sequence>